<dbReference type="EMBL" id="AY653733">
    <property type="protein sequence ID" value="AAV50978.1"/>
    <property type="molecule type" value="Genomic_DNA"/>
</dbReference>
<dbReference type="KEGG" id="vg:9925372"/>
<dbReference type="OrthoDB" id="19153at10239"/>
<dbReference type="Proteomes" id="UP000001134">
    <property type="component" value="Genome"/>
</dbReference>
<dbReference type="InterPro" id="IPR025475">
    <property type="entry name" value="DUF4326"/>
</dbReference>
<dbReference type="Pfam" id="PF14216">
    <property type="entry name" value="DUF4326"/>
    <property type="match status" value="1"/>
</dbReference>
<reference key="1">
    <citation type="journal article" date="2004" name="Science">
        <title>The 1.2-megabase genome sequence of Mimivirus.</title>
        <authorList>
            <person name="Raoult D."/>
            <person name="Audic S."/>
            <person name="Robert C."/>
            <person name="Abergel C."/>
            <person name="Renesto P."/>
            <person name="Ogata H."/>
            <person name="La Scola B."/>
            <person name="Susan M."/>
            <person name="Claverie J.-M."/>
        </authorList>
    </citation>
    <scope>NUCLEOTIDE SEQUENCE [LARGE SCALE GENOMIC DNA]</scope>
    <source>
        <strain>Rowbotham-Bradford</strain>
    </source>
</reference>
<gene>
    <name type="ordered locus">MIMI_R718</name>
</gene>
<accession>Q5UNW9</accession>
<organism>
    <name type="scientific">Acanthamoeba polyphaga mimivirus</name>
    <name type="common">APMV</name>
    <dbReference type="NCBI Taxonomy" id="212035"/>
    <lineage>
        <taxon>Viruses</taxon>
        <taxon>Varidnaviria</taxon>
        <taxon>Bamfordvirae</taxon>
        <taxon>Nucleocytoviricota</taxon>
        <taxon>Megaviricetes</taxon>
        <taxon>Imitervirales</taxon>
        <taxon>Mimiviridae</taxon>
        <taxon>Megamimivirinae</taxon>
        <taxon>Mimivirus</taxon>
        <taxon>Mimivirus bradfordmassiliense</taxon>
    </lineage>
</organism>
<organismHost>
    <name type="scientific">Acanthamoeba polyphaga</name>
    <name type="common">Amoeba</name>
    <dbReference type="NCBI Taxonomy" id="5757"/>
</organismHost>
<feature type="chain" id="PRO_0000071333" description="Uncharacterized protein R718">
    <location>
        <begin position="1"/>
        <end position="130"/>
    </location>
</feature>
<name>YR718_MIMIV</name>
<keyword id="KW-1185">Reference proteome</keyword>
<protein>
    <recommendedName>
        <fullName>Uncharacterized protein R718</fullName>
    </recommendedName>
</protein>
<proteinExistence type="predicted"/>
<sequence>MTAPILVRIKRNKNDIVQNCDVYIGRQCNMGGWNLPDSKWKNPFTIKQYGSAEIVCEKYFKYIVSSDLFHDIPELKSKTIGCWCDFPVNKIITGFYCHGCVLIQLYKLIEKYDFDTHKIQSILKKAFCCD</sequence>